<comment type="function">
    <text evidence="1">Catalyzes the reversible transfer of the terminal phosphate group between ATP and AMP. Plays an important role in cellular energy homeostasis and in adenine nucleotide metabolism. Adenylate kinase activity is critical for regulation of the phosphate utilization and the AMP de novo biosynthesis pathways.</text>
</comment>
<comment type="catalytic activity">
    <reaction evidence="1">
        <text>AMP + ATP = 2 ADP</text>
        <dbReference type="Rhea" id="RHEA:12973"/>
        <dbReference type="ChEBI" id="CHEBI:30616"/>
        <dbReference type="ChEBI" id="CHEBI:456215"/>
        <dbReference type="ChEBI" id="CHEBI:456216"/>
        <dbReference type="EC" id="2.7.4.3"/>
    </reaction>
</comment>
<comment type="subunit">
    <text evidence="1">Monomer.</text>
</comment>
<comment type="subcellular location">
    <subcellularLocation>
        <location evidence="1">Cytoplasm</location>
        <location evidence="1">Cytosol</location>
    </subcellularLocation>
    <subcellularLocation>
        <location evidence="1">Mitochondrion intermembrane space</location>
    </subcellularLocation>
    <text evidence="1">Predominantly mitochondrial.</text>
</comment>
<comment type="domain">
    <text evidence="1">Consists of three domains, a large central CORE domain and two small peripheral domains, NMPbind and LID, which undergo movements during catalysis. The LID domain closes over the site of phosphoryl transfer upon ATP binding. Assembling and dissambling the active center during each catalytic cycle provides an effective means to prevent ATP hydrolysis.</text>
</comment>
<comment type="similarity">
    <text evidence="1">Belongs to the adenylate kinase family. AK2 subfamily.</text>
</comment>
<protein>
    <recommendedName>
        <fullName evidence="1">Adenylate kinase</fullName>
        <ecNumber evidence="1">2.7.4.3</ecNumber>
    </recommendedName>
    <alternativeName>
        <fullName evidence="1">ATP-AMP transphosphorylase</fullName>
    </alternativeName>
    <alternativeName>
        <fullName evidence="1">ATP:AMP phosphotransferase</fullName>
    </alternativeName>
    <alternativeName>
        <fullName evidence="1">Adenylate kinase cytosolic and mitochondrial</fullName>
    </alternativeName>
    <alternativeName>
        <fullName evidence="1">Adenylate monophosphate kinase</fullName>
    </alternativeName>
</protein>
<keyword id="KW-0067">ATP-binding</keyword>
<keyword id="KW-0963">Cytoplasm</keyword>
<keyword id="KW-0418">Kinase</keyword>
<keyword id="KW-0496">Mitochondrion</keyword>
<keyword id="KW-0547">Nucleotide-binding</keyword>
<keyword id="KW-1185">Reference proteome</keyword>
<keyword id="KW-0808">Transferase</keyword>
<sequence length="275" mass="29710">MAPIGDDATQTLHDLVNKLESRVKELEDKLAHAAGGSAPSSSEGIRMILMGPPGAGKGTQAPKIKEKFSCCHLATGDMLRSQVAKKTPLGREAKKIMDQGGLVSDEIVIGMIKAELETNQECKGGFILDGFPRTVVQAERLDAMLSARNQKLQHAVELQIDDSLLVSRITGRLVHPASGRSYHRVFNPPKAEMKDDITGEPLVSRSDDNAEALKKRLVTYHDQTAPVVGYYQKTGIWSGIDASQEPGAVWKSLLGVFDKQKAPSGSLLSKITGRS</sequence>
<feature type="chain" id="PRO_0000365687" description="Adenylate kinase">
    <location>
        <begin position="1"/>
        <end position="275"/>
    </location>
</feature>
<feature type="region of interest" description="NMP" evidence="1">
    <location>
        <begin position="74"/>
        <end position="103"/>
    </location>
</feature>
<feature type="region of interest" description="LID" evidence="1">
    <location>
        <begin position="171"/>
        <end position="208"/>
    </location>
</feature>
<feature type="binding site" evidence="1">
    <location>
        <begin position="54"/>
        <end position="59"/>
    </location>
    <ligand>
        <name>ATP</name>
        <dbReference type="ChEBI" id="CHEBI:30616"/>
    </ligand>
</feature>
<feature type="binding site" evidence="1">
    <location>
        <position position="75"/>
    </location>
    <ligand>
        <name>AMP</name>
        <dbReference type="ChEBI" id="CHEBI:456215"/>
    </ligand>
</feature>
<feature type="binding site" evidence="1">
    <location>
        <position position="80"/>
    </location>
    <ligand>
        <name>AMP</name>
        <dbReference type="ChEBI" id="CHEBI:456215"/>
    </ligand>
</feature>
<feature type="binding site" evidence="1">
    <location>
        <begin position="101"/>
        <end position="103"/>
    </location>
    <ligand>
        <name>AMP</name>
        <dbReference type="ChEBI" id="CHEBI:456215"/>
    </ligand>
</feature>
<feature type="binding site" evidence="1">
    <location>
        <begin position="130"/>
        <end position="133"/>
    </location>
    <ligand>
        <name>AMP</name>
        <dbReference type="ChEBI" id="CHEBI:456215"/>
    </ligand>
</feature>
<feature type="binding site" evidence="1">
    <location>
        <position position="137"/>
    </location>
    <ligand>
        <name>AMP</name>
        <dbReference type="ChEBI" id="CHEBI:456215"/>
    </ligand>
</feature>
<feature type="binding site" evidence="1">
    <location>
        <position position="172"/>
    </location>
    <ligand>
        <name>ATP</name>
        <dbReference type="ChEBI" id="CHEBI:30616"/>
    </ligand>
</feature>
<feature type="binding site" evidence="1">
    <location>
        <begin position="181"/>
        <end position="182"/>
    </location>
    <ligand>
        <name>ATP</name>
        <dbReference type="ChEBI" id="CHEBI:30616"/>
    </ligand>
</feature>
<feature type="binding site" evidence="1">
    <location>
        <position position="205"/>
    </location>
    <ligand>
        <name>AMP</name>
        <dbReference type="ChEBI" id="CHEBI:456215"/>
    </ligand>
</feature>
<feature type="binding site" evidence="1">
    <location>
        <position position="216"/>
    </location>
    <ligand>
        <name>AMP</name>
        <dbReference type="ChEBI" id="CHEBI:456215"/>
    </ligand>
</feature>
<feature type="binding site" evidence="1">
    <location>
        <position position="244"/>
    </location>
    <ligand>
        <name>ATP</name>
        <dbReference type="ChEBI" id="CHEBI:30616"/>
    </ligand>
</feature>
<accession>A7E8H8</accession>
<gene>
    <name type="primary">adk1</name>
    <name type="ORF">SS1G_01606</name>
</gene>
<organism>
    <name type="scientific">Sclerotinia sclerotiorum (strain ATCC 18683 / 1980 / Ss-1)</name>
    <name type="common">White mold</name>
    <name type="synonym">Whetzelinia sclerotiorum</name>
    <dbReference type="NCBI Taxonomy" id="665079"/>
    <lineage>
        <taxon>Eukaryota</taxon>
        <taxon>Fungi</taxon>
        <taxon>Dikarya</taxon>
        <taxon>Ascomycota</taxon>
        <taxon>Pezizomycotina</taxon>
        <taxon>Leotiomycetes</taxon>
        <taxon>Helotiales</taxon>
        <taxon>Sclerotiniaceae</taxon>
        <taxon>Sclerotinia</taxon>
    </lineage>
</organism>
<name>KAD2_SCLS1</name>
<evidence type="ECO:0000255" key="1">
    <source>
        <dbReference type="HAMAP-Rule" id="MF_03168"/>
    </source>
</evidence>
<proteinExistence type="inferred from homology"/>
<dbReference type="EC" id="2.7.4.3" evidence="1"/>
<dbReference type="EMBL" id="CH476622">
    <property type="protein sequence ID" value="EDN96680.1"/>
    <property type="molecule type" value="Genomic_DNA"/>
</dbReference>
<dbReference type="RefSeq" id="XP_001597412.1">
    <property type="nucleotide sequence ID" value="XM_001597362.1"/>
</dbReference>
<dbReference type="SMR" id="A7E8H8"/>
<dbReference type="FunCoup" id="A7E8H8">
    <property type="interactions" value="799"/>
</dbReference>
<dbReference type="STRING" id="665079.A7E8H8"/>
<dbReference type="EnsemblFungi" id="EDN96680">
    <property type="protein sequence ID" value="EDN96680"/>
    <property type="gene ID" value="SS1G_01606"/>
</dbReference>
<dbReference type="GeneID" id="5493216"/>
<dbReference type="KEGG" id="ssl:SS1G_01606"/>
<dbReference type="VEuPathDB" id="FungiDB:sscle_01g007510"/>
<dbReference type="eggNOG" id="KOG3078">
    <property type="taxonomic scope" value="Eukaryota"/>
</dbReference>
<dbReference type="HOGENOM" id="CLU_032354_1_0_1"/>
<dbReference type="InParanoid" id="A7E8H8"/>
<dbReference type="OMA" id="VYHEQTA"/>
<dbReference type="OrthoDB" id="439792at2759"/>
<dbReference type="Proteomes" id="UP000001312">
    <property type="component" value="Unassembled WGS sequence"/>
</dbReference>
<dbReference type="GO" id="GO:0005737">
    <property type="term" value="C:cytoplasm"/>
    <property type="evidence" value="ECO:0000318"/>
    <property type="project" value="GO_Central"/>
</dbReference>
<dbReference type="GO" id="GO:0005829">
    <property type="term" value="C:cytosol"/>
    <property type="evidence" value="ECO:0007669"/>
    <property type="project" value="UniProtKB-SubCell"/>
</dbReference>
<dbReference type="GO" id="GO:0005758">
    <property type="term" value="C:mitochondrial intermembrane space"/>
    <property type="evidence" value="ECO:0007669"/>
    <property type="project" value="UniProtKB-SubCell"/>
</dbReference>
<dbReference type="GO" id="GO:0005739">
    <property type="term" value="C:mitochondrion"/>
    <property type="evidence" value="ECO:0000318"/>
    <property type="project" value="GO_Central"/>
</dbReference>
<dbReference type="GO" id="GO:0004017">
    <property type="term" value="F:adenylate kinase activity"/>
    <property type="evidence" value="ECO:0000318"/>
    <property type="project" value="GO_Central"/>
</dbReference>
<dbReference type="GO" id="GO:0016208">
    <property type="term" value="F:AMP binding"/>
    <property type="evidence" value="ECO:0007669"/>
    <property type="project" value="EnsemblFungi"/>
</dbReference>
<dbReference type="GO" id="GO:0005524">
    <property type="term" value="F:ATP binding"/>
    <property type="evidence" value="ECO:0007669"/>
    <property type="project" value="UniProtKB-KW"/>
</dbReference>
<dbReference type="GO" id="GO:0003688">
    <property type="term" value="F:DNA replication origin binding"/>
    <property type="evidence" value="ECO:0007669"/>
    <property type="project" value="EnsemblFungi"/>
</dbReference>
<dbReference type="GO" id="GO:0006172">
    <property type="term" value="P:ADP biosynthetic process"/>
    <property type="evidence" value="ECO:0000318"/>
    <property type="project" value="GO_Central"/>
</dbReference>
<dbReference type="GO" id="GO:0046033">
    <property type="term" value="P:AMP metabolic process"/>
    <property type="evidence" value="ECO:0007669"/>
    <property type="project" value="UniProtKB-UniRule"/>
</dbReference>
<dbReference type="GO" id="GO:0046034">
    <property type="term" value="P:ATP metabolic process"/>
    <property type="evidence" value="ECO:0007669"/>
    <property type="project" value="UniProtKB-UniRule"/>
</dbReference>
<dbReference type="GO" id="GO:0006270">
    <property type="term" value="P:DNA replication initiation"/>
    <property type="evidence" value="ECO:0007669"/>
    <property type="project" value="EnsemblFungi"/>
</dbReference>
<dbReference type="GO" id="GO:0036388">
    <property type="term" value="P:pre-replicative complex assembly"/>
    <property type="evidence" value="ECO:0007669"/>
    <property type="project" value="EnsemblFungi"/>
</dbReference>
<dbReference type="CDD" id="cd01428">
    <property type="entry name" value="ADK"/>
    <property type="match status" value="1"/>
</dbReference>
<dbReference type="FunFam" id="3.40.50.300:FF:000106">
    <property type="entry name" value="Adenylate kinase mitochondrial"/>
    <property type="match status" value="1"/>
</dbReference>
<dbReference type="Gene3D" id="3.40.50.300">
    <property type="entry name" value="P-loop containing nucleotide triphosphate hydrolases"/>
    <property type="match status" value="1"/>
</dbReference>
<dbReference type="HAMAP" id="MF_00235">
    <property type="entry name" value="Adenylate_kinase_Adk"/>
    <property type="match status" value="1"/>
</dbReference>
<dbReference type="HAMAP" id="MF_03168">
    <property type="entry name" value="Adenylate_kinase_AK2"/>
    <property type="match status" value="1"/>
</dbReference>
<dbReference type="InterPro" id="IPR006259">
    <property type="entry name" value="Adenyl_kin_sub"/>
</dbReference>
<dbReference type="InterPro" id="IPR000850">
    <property type="entry name" value="Adenylat/UMP-CMP_kin"/>
</dbReference>
<dbReference type="InterPro" id="IPR033690">
    <property type="entry name" value="Adenylat_kinase_CS"/>
</dbReference>
<dbReference type="InterPro" id="IPR007862">
    <property type="entry name" value="Adenylate_kinase_lid-dom"/>
</dbReference>
<dbReference type="InterPro" id="IPR028587">
    <property type="entry name" value="AK2"/>
</dbReference>
<dbReference type="InterPro" id="IPR027417">
    <property type="entry name" value="P-loop_NTPase"/>
</dbReference>
<dbReference type="NCBIfam" id="TIGR01351">
    <property type="entry name" value="adk"/>
    <property type="match status" value="1"/>
</dbReference>
<dbReference type="NCBIfam" id="NF001381">
    <property type="entry name" value="PRK00279.1-3"/>
    <property type="match status" value="1"/>
</dbReference>
<dbReference type="NCBIfam" id="NF011100">
    <property type="entry name" value="PRK14527.1"/>
    <property type="match status" value="1"/>
</dbReference>
<dbReference type="PANTHER" id="PTHR23359">
    <property type="entry name" value="NUCLEOTIDE KINASE"/>
    <property type="match status" value="1"/>
</dbReference>
<dbReference type="Pfam" id="PF00406">
    <property type="entry name" value="ADK"/>
    <property type="match status" value="1"/>
</dbReference>
<dbReference type="Pfam" id="PF05191">
    <property type="entry name" value="ADK_lid"/>
    <property type="match status" value="1"/>
</dbReference>
<dbReference type="PRINTS" id="PR00094">
    <property type="entry name" value="ADENYLTKNASE"/>
</dbReference>
<dbReference type="SUPFAM" id="SSF52540">
    <property type="entry name" value="P-loop containing nucleoside triphosphate hydrolases"/>
    <property type="match status" value="1"/>
</dbReference>
<dbReference type="PROSITE" id="PS00113">
    <property type="entry name" value="ADENYLATE_KINASE"/>
    <property type="match status" value="1"/>
</dbReference>
<reference key="1">
    <citation type="journal article" date="2011" name="PLoS Genet.">
        <title>Genomic analysis of the necrotrophic fungal pathogens Sclerotinia sclerotiorum and Botrytis cinerea.</title>
        <authorList>
            <person name="Amselem J."/>
            <person name="Cuomo C.A."/>
            <person name="van Kan J.A.L."/>
            <person name="Viaud M."/>
            <person name="Benito E.P."/>
            <person name="Couloux A."/>
            <person name="Coutinho P.M."/>
            <person name="de Vries R.P."/>
            <person name="Dyer P.S."/>
            <person name="Fillinger S."/>
            <person name="Fournier E."/>
            <person name="Gout L."/>
            <person name="Hahn M."/>
            <person name="Kohn L."/>
            <person name="Lapalu N."/>
            <person name="Plummer K.M."/>
            <person name="Pradier J.-M."/>
            <person name="Quevillon E."/>
            <person name="Sharon A."/>
            <person name="Simon A."/>
            <person name="ten Have A."/>
            <person name="Tudzynski B."/>
            <person name="Tudzynski P."/>
            <person name="Wincker P."/>
            <person name="Andrew M."/>
            <person name="Anthouard V."/>
            <person name="Beever R.E."/>
            <person name="Beffa R."/>
            <person name="Benoit I."/>
            <person name="Bouzid O."/>
            <person name="Brault B."/>
            <person name="Chen Z."/>
            <person name="Choquer M."/>
            <person name="Collemare J."/>
            <person name="Cotton P."/>
            <person name="Danchin E.G."/>
            <person name="Da Silva C."/>
            <person name="Gautier A."/>
            <person name="Giraud C."/>
            <person name="Giraud T."/>
            <person name="Gonzalez C."/>
            <person name="Grossetete S."/>
            <person name="Gueldener U."/>
            <person name="Henrissat B."/>
            <person name="Howlett B.J."/>
            <person name="Kodira C."/>
            <person name="Kretschmer M."/>
            <person name="Lappartient A."/>
            <person name="Leroch M."/>
            <person name="Levis C."/>
            <person name="Mauceli E."/>
            <person name="Neuveglise C."/>
            <person name="Oeser B."/>
            <person name="Pearson M."/>
            <person name="Poulain J."/>
            <person name="Poussereau N."/>
            <person name="Quesneville H."/>
            <person name="Rascle C."/>
            <person name="Schumacher J."/>
            <person name="Segurens B."/>
            <person name="Sexton A."/>
            <person name="Silva E."/>
            <person name="Sirven C."/>
            <person name="Soanes D.M."/>
            <person name="Talbot N.J."/>
            <person name="Templeton M."/>
            <person name="Yandava C."/>
            <person name="Yarden O."/>
            <person name="Zeng Q."/>
            <person name="Rollins J.A."/>
            <person name="Lebrun M.-H."/>
            <person name="Dickman M."/>
        </authorList>
    </citation>
    <scope>NUCLEOTIDE SEQUENCE [LARGE SCALE GENOMIC DNA]</scope>
    <source>
        <strain>ATCC 18683 / 1980 / Ss-1</strain>
    </source>
</reference>